<comment type="function">
    <text evidence="4">Inhibits both peak current and fast inactivation of voltage-gated sodium channels (Nav) channels. Inhibits the inactivation of Nav on DRG neurons (EC(50)=1.77 uM) and peak current of cardiac myocytes (IC(50)=0.90 uM).</text>
</comment>
<comment type="subcellular location">
    <subcellularLocation>
        <location evidence="3 4">Secreted</location>
    </subcellularLocation>
</comment>
<comment type="tissue specificity">
    <text evidence="8 9">Expressed by the venom gland.</text>
</comment>
<comment type="domain">
    <text evidence="1">The presence of a 'disulfide through disulfide knot' structurally defines this protein as a knottin.</text>
</comment>
<comment type="mass spectrometry">
    <text>Monoisotopic mass.</text>
</comment>
<comment type="similarity">
    <text evidence="7">Belongs to the neurotoxin 10 (Hwtx-1) family. 37 (Jztx-31) subfamily.</text>
</comment>
<name>JZ31B_CHIGU</name>
<feature type="signal peptide" evidence="2">
    <location>
        <begin position="1"/>
        <end position="21"/>
    </location>
</feature>
<feature type="propeptide" id="PRO_0000398463" evidence="3 4">
    <location>
        <begin position="22"/>
        <end position="50"/>
    </location>
</feature>
<feature type="peptide" id="PRO_0000398464" description="Mu-theraphotoxin-Cg2a 2" evidence="3 4">
    <location>
        <begin position="51"/>
        <end position="84"/>
    </location>
</feature>
<feature type="modified residue" description="Phenylalanine amide" evidence="3 4">
    <location>
        <position position="84"/>
    </location>
</feature>
<feature type="disulfide bond" evidence="1">
    <location>
        <begin position="52"/>
        <end position="66"/>
    </location>
</feature>
<feature type="disulfide bond" evidence="1">
    <location>
        <begin position="59"/>
        <end position="71"/>
    </location>
</feature>
<feature type="disulfide bond" evidence="1">
    <location>
        <begin position="65"/>
        <end position="78"/>
    </location>
</feature>
<dbReference type="EMBL" id="EU233884">
    <property type="protein sequence ID" value="ABY71703.1"/>
    <property type="molecule type" value="mRNA"/>
</dbReference>
<dbReference type="SMR" id="B1P1F3"/>
<dbReference type="ArachnoServer" id="AS000832">
    <property type="toxin name" value="delta-theraphotoxin-Cg2a"/>
</dbReference>
<dbReference type="GO" id="GO:0005576">
    <property type="term" value="C:extracellular region"/>
    <property type="evidence" value="ECO:0007669"/>
    <property type="project" value="UniProtKB-SubCell"/>
</dbReference>
<dbReference type="GO" id="GO:0008200">
    <property type="term" value="F:ion channel inhibitor activity"/>
    <property type="evidence" value="ECO:0007669"/>
    <property type="project" value="InterPro"/>
</dbReference>
<dbReference type="GO" id="GO:0090729">
    <property type="term" value="F:toxin activity"/>
    <property type="evidence" value="ECO:0007669"/>
    <property type="project" value="UniProtKB-KW"/>
</dbReference>
<dbReference type="InterPro" id="IPR011696">
    <property type="entry name" value="Huwentoxin-1"/>
</dbReference>
<dbReference type="Pfam" id="PF07740">
    <property type="entry name" value="Toxin_12"/>
    <property type="match status" value="1"/>
</dbReference>
<dbReference type="SUPFAM" id="SSF57059">
    <property type="entry name" value="omega toxin-like"/>
    <property type="match status" value="1"/>
</dbReference>
<sequence>MKVSVVITLAVLGVMFVWASAAELEERGSDQRDSPAWIKSMERIFQSEERECTKFLGGCSEDSECCPHLGCKDVLYYCAWDGTFGK</sequence>
<proteinExistence type="evidence at protein level"/>
<protein>
    <recommendedName>
        <fullName evidence="7">Mu-theraphotoxin-Cg2a 2</fullName>
        <shortName evidence="7">Mu-TRTX-Cg2a</shortName>
    </recommendedName>
    <alternativeName>
        <fullName evidence="7">Jingzhaotoxin-31.2</fullName>
        <shortName evidence="10">JZTX-31.2</shortName>
    </alternativeName>
    <alternativeName>
        <fullName evidence="6">Jingzhaotoxin-IV</fullName>
        <shortName evidence="6">JZTX-IV</shortName>
    </alternativeName>
    <alternativeName>
        <fullName evidence="5">Peptide F1-23.73</fullName>
    </alternativeName>
</protein>
<keyword id="KW-0027">Amidation</keyword>
<keyword id="KW-0903">Direct protein sequencing</keyword>
<keyword id="KW-1015">Disulfide bond</keyword>
<keyword id="KW-0872">Ion channel impairing toxin</keyword>
<keyword id="KW-0960">Knottin</keyword>
<keyword id="KW-0964">Secreted</keyword>
<keyword id="KW-0732">Signal</keyword>
<keyword id="KW-0800">Toxin</keyword>
<reference key="1">
    <citation type="journal article" date="2008" name="Toxicon">
        <title>JZTX-IV, a unique acidic sodium channel toxin isolated from the spider Chilobrachys jingzhao.</title>
        <authorList>
            <person name="Wang M."/>
            <person name="Diao J."/>
            <person name="Li J."/>
            <person name="Tang J."/>
            <person name="Lin Y."/>
            <person name="Hu W."/>
            <person name="Zhang Y."/>
            <person name="Xiao Y."/>
            <person name="Liang S."/>
        </authorList>
    </citation>
    <scope>NUCLEOTIDE SEQUENCE [MRNA]</scope>
    <scope>PROTEIN SEQUENCE OF 51-84</scope>
    <scope>AMIDATION AT PHE-84</scope>
    <scope>FUNCTION</scope>
    <scope>MASS SPECTROMETRY</scope>
    <scope>SUBCELLULAR LOCATION</scope>
    <source>
        <tissue>Venom</tissue>
        <tissue>Venom gland</tissue>
    </source>
</reference>
<reference key="2">
    <citation type="journal article" date="2008" name="Cell. Mol. Life Sci.">
        <title>Molecular diversity and evolution of cystine knot toxins of the tarantula Chilobrachys jingzhao.</title>
        <authorList>
            <person name="Chen J."/>
            <person name="Deng M."/>
            <person name="He Q."/>
            <person name="Meng E."/>
            <person name="Jiang L."/>
            <person name="Liao Z."/>
            <person name="Rong M."/>
            <person name="Liang S."/>
        </authorList>
    </citation>
    <scope>NUCLEOTIDE SEQUENCE [LARGE SCALE MRNA]</scope>
    <source>
        <tissue>Venom gland</tissue>
    </source>
</reference>
<reference key="3">
    <citation type="journal article" date="2007" name="Proteomics">
        <title>Proteomic and peptidomic analysis of the venom from Chinese tarantula Chilobrachys jingzhao.</title>
        <authorList>
            <person name="Liao Z."/>
            <person name="Cao J."/>
            <person name="Li S."/>
            <person name="Yan X."/>
            <person name="Hu W."/>
            <person name="He Q."/>
            <person name="Chen J."/>
            <person name="Tang J."/>
            <person name="Xie J."/>
            <person name="Liang S."/>
        </authorList>
    </citation>
    <scope>PROTEIN SEQUENCE OF 51-84</scope>
    <scope>MASS SPECTROMETRY</scope>
    <scope>AMIDATION AT PHE-84</scope>
    <scope>SUBCELLULAR LOCATION</scope>
    <source>
        <tissue>Venom</tissue>
    </source>
</reference>
<accession>B1P1F3</accession>
<organism>
    <name type="scientific">Chilobrachys guangxiensis</name>
    <name type="common">Chinese earth tiger tarantula</name>
    <name type="synonym">Chilobrachys jingzhao</name>
    <dbReference type="NCBI Taxonomy" id="278060"/>
    <lineage>
        <taxon>Eukaryota</taxon>
        <taxon>Metazoa</taxon>
        <taxon>Ecdysozoa</taxon>
        <taxon>Arthropoda</taxon>
        <taxon>Chelicerata</taxon>
        <taxon>Arachnida</taxon>
        <taxon>Araneae</taxon>
        <taxon>Mygalomorphae</taxon>
        <taxon>Theraphosidae</taxon>
        <taxon>Chilobrachys</taxon>
    </lineage>
</organism>
<evidence type="ECO:0000250" key="1">
    <source>
        <dbReference type="UniProtKB" id="B1P1E1"/>
    </source>
</evidence>
<evidence type="ECO:0000255" key="2"/>
<evidence type="ECO:0000269" key="3">
    <source>
    </source>
</evidence>
<evidence type="ECO:0000269" key="4">
    <source>
    </source>
</evidence>
<evidence type="ECO:0000303" key="5">
    <source>
    </source>
</evidence>
<evidence type="ECO:0000303" key="6">
    <source>
    </source>
</evidence>
<evidence type="ECO:0000305" key="7"/>
<evidence type="ECO:0000305" key="8">
    <source>
    </source>
</evidence>
<evidence type="ECO:0000305" key="9">
    <source>
    </source>
</evidence>
<evidence type="ECO:0000312" key="10">
    <source>
        <dbReference type="EMBL" id="ABY71703.1"/>
    </source>
</evidence>